<reference key="1">
    <citation type="journal article" date="2005" name="Glycobiology">
        <title>Molecular cloning of two Arabidopsis UDP-galactose transporters by complementation of a deficient Chinese hamster ovary cell line.</title>
        <authorList>
            <person name="Bakker H."/>
            <person name="Routier F."/>
            <person name="Oelmann S."/>
            <person name="Jordi W."/>
            <person name="Lommen A."/>
            <person name="Gerardy-Schahn R."/>
            <person name="Bosch D."/>
        </authorList>
    </citation>
    <scope>NUCLEOTIDE SEQUENCE [MRNA]</scope>
    <scope>FUNCTION</scope>
    <source>
        <strain>cv. Columbia</strain>
        <tissue>Silique</tissue>
    </source>
</reference>
<reference key="2">
    <citation type="journal article" date="2000" name="Nature">
        <title>Sequence and analysis of chromosome 1 of the plant Arabidopsis thaliana.</title>
        <authorList>
            <person name="Theologis A."/>
            <person name="Ecker J.R."/>
            <person name="Palm C.J."/>
            <person name="Federspiel N.A."/>
            <person name="Kaul S."/>
            <person name="White O."/>
            <person name="Alonso J."/>
            <person name="Altafi H."/>
            <person name="Araujo R."/>
            <person name="Bowman C.L."/>
            <person name="Brooks S.Y."/>
            <person name="Buehler E."/>
            <person name="Chan A."/>
            <person name="Chao Q."/>
            <person name="Chen H."/>
            <person name="Cheuk R.F."/>
            <person name="Chin C.W."/>
            <person name="Chung M.K."/>
            <person name="Conn L."/>
            <person name="Conway A.B."/>
            <person name="Conway A.R."/>
            <person name="Creasy T.H."/>
            <person name="Dewar K."/>
            <person name="Dunn P."/>
            <person name="Etgu P."/>
            <person name="Feldblyum T.V."/>
            <person name="Feng J.-D."/>
            <person name="Fong B."/>
            <person name="Fujii C.Y."/>
            <person name="Gill J.E."/>
            <person name="Goldsmith A.D."/>
            <person name="Haas B."/>
            <person name="Hansen N.F."/>
            <person name="Hughes B."/>
            <person name="Huizar L."/>
            <person name="Hunter J.L."/>
            <person name="Jenkins J."/>
            <person name="Johnson-Hopson C."/>
            <person name="Khan S."/>
            <person name="Khaykin E."/>
            <person name="Kim C.J."/>
            <person name="Koo H.L."/>
            <person name="Kremenetskaia I."/>
            <person name="Kurtz D.B."/>
            <person name="Kwan A."/>
            <person name="Lam B."/>
            <person name="Langin-Hooper S."/>
            <person name="Lee A."/>
            <person name="Lee J.M."/>
            <person name="Lenz C.A."/>
            <person name="Li J.H."/>
            <person name="Li Y.-P."/>
            <person name="Lin X."/>
            <person name="Liu S.X."/>
            <person name="Liu Z.A."/>
            <person name="Luros J.S."/>
            <person name="Maiti R."/>
            <person name="Marziali A."/>
            <person name="Militscher J."/>
            <person name="Miranda M."/>
            <person name="Nguyen M."/>
            <person name="Nierman W.C."/>
            <person name="Osborne B.I."/>
            <person name="Pai G."/>
            <person name="Peterson J."/>
            <person name="Pham P.K."/>
            <person name="Rizzo M."/>
            <person name="Rooney T."/>
            <person name="Rowley D."/>
            <person name="Sakano H."/>
            <person name="Salzberg S.L."/>
            <person name="Schwartz J.R."/>
            <person name="Shinn P."/>
            <person name="Southwick A.M."/>
            <person name="Sun H."/>
            <person name="Tallon L.J."/>
            <person name="Tambunga G."/>
            <person name="Toriumi M.J."/>
            <person name="Town C.D."/>
            <person name="Utterback T."/>
            <person name="Van Aken S."/>
            <person name="Vaysberg M."/>
            <person name="Vysotskaia V.S."/>
            <person name="Walker M."/>
            <person name="Wu D."/>
            <person name="Yu G."/>
            <person name="Fraser C.M."/>
            <person name="Venter J.C."/>
            <person name="Davis R.W."/>
        </authorList>
    </citation>
    <scope>NUCLEOTIDE SEQUENCE [LARGE SCALE GENOMIC DNA]</scope>
    <source>
        <strain>cv. Columbia</strain>
        <tissue>Silique</tissue>
    </source>
</reference>
<reference key="3">
    <citation type="journal article" date="2017" name="Plant J.">
        <title>Araport11: a complete reannotation of the Arabidopsis thaliana reference genome.</title>
        <authorList>
            <person name="Cheng C.Y."/>
            <person name="Krishnakumar V."/>
            <person name="Chan A.P."/>
            <person name="Thibaud-Nissen F."/>
            <person name="Schobel S."/>
            <person name="Town C.D."/>
        </authorList>
    </citation>
    <scope>GENOME REANNOTATION</scope>
    <source>
        <strain>cv. Columbia</strain>
    </source>
</reference>
<reference key="4">
    <citation type="journal article" date="2003" name="Science">
        <title>Empirical analysis of transcriptional activity in the Arabidopsis genome.</title>
        <authorList>
            <person name="Yamada K."/>
            <person name="Lim J."/>
            <person name="Dale J.M."/>
            <person name="Chen H."/>
            <person name="Shinn P."/>
            <person name="Palm C.J."/>
            <person name="Southwick A.M."/>
            <person name="Wu H.C."/>
            <person name="Kim C.J."/>
            <person name="Nguyen M."/>
            <person name="Pham P.K."/>
            <person name="Cheuk R.F."/>
            <person name="Karlin-Newmann G."/>
            <person name="Liu S.X."/>
            <person name="Lam B."/>
            <person name="Sakano H."/>
            <person name="Wu T."/>
            <person name="Yu G."/>
            <person name="Miranda M."/>
            <person name="Quach H.L."/>
            <person name="Tripp M."/>
            <person name="Chang C.H."/>
            <person name="Lee J.M."/>
            <person name="Toriumi M.J."/>
            <person name="Chan M.M."/>
            <person name="Tang C.C."/>
            <person name="Onodera C.S."/>
            <person name="Deng J.M."/>
            <person name="Akiyama K."/>
            <person name="Ansari Y."/>
            <person name="Arakawa T."/>
            <person name="Banh J."/>
            <person name="Banno F."/>
            <person name="Bowser L."/>
            <person name="Brooks S.Y."/>
            <person name="Carninci P."/>
            <person name="Chao Q."/>
            <person name="Choy N."/>
            <person name="Enju A."/>
            <person name="Goldsmith A.D."/>
            <person name="Gurjal M."/>
            <person name="Hansen N.F."/>
            <person name="Hayashizaki Y."/>
            <person name="Johnson-Hopson C."/>
            <person name="Hsuan V.W."/>
            <person name="Iida K."/>
            <person name="Karnes M."/>
            <person name="Khan S."/>
            <person name="Koesema E."/>
            <person name="Ishida J."/>
            <person name="Jiang P.X."/>
            <person name="Jones T."/>
            <person name="Kawai J."/>
            <person name="Kamiya A."/>
            <person name="Meyers C."/>
            <person name="Nakajima M."/>
            <person name="Narusaka M."/>
            <person name="Seki M."/>
            <person name="Sakurai T."/>
            <person name="Satou M."/>
            <person name="Tamse R."/>
            <person name="Vaysberg M."/>
            <person name="Wallender E.K."/>
            <person name="Wong C."/>
            <person name="Yamamura Y."/>
            <person name="Yuan S."/>
            <person name="Shinozaki K."/>
            <person name="Davis R.W."/>
            <person name="Theologis A."/>
            <person name="Ecker J.R."/>
        </authorList>
    </citation>
    <scope>NUCLEOTIDE SEQUENCE [LARGE SCALE MRNA]</scope>
    <source>
        <strain>cv. Columbia</strain>
    </source>
</reference>
<reference key="5">
    <citation type="journal article" date="2006" name="FEBS Lett.">
        <title>Characterization of AtNST-KT1, a novel UDP-galactose transporter from Arabidopsis thaliana.</title>
        <authorList>
            <person name="Rollwitz I."/>
            <person name="Santaella M."/>
            <person name="Hille D."/>
            <person name="Fluegge U.I."/>
            <person name="Fischer K."/>
        </authorList>
    </citation>
    <scope>SUBCELLULAR LOCATION</scope>
</reference>
<reference key="6">
    <citation type="journal article" date="2014" name="Proc. Natl. Acad. Sci. U.S.A.">
        <title>The Golgi localized bifunctional UDP-rhamnose/UDP-galactose transporter family of Arabidopsis.</title>
        <authorList>
            <person name="Rautengarten C."/>
            <person name="Ebert B."/>
            <person name="Moreno I."/>
            <person name="Temple H."/>
            <person name="Herter T."/>
            <person name="Link B."/>
            <person name="Donas-Cofre D."/>
            <person name="Moreno A."/>
            <person name="Saez-Aguayo S."/>
            <person name="Blanco F."/>
            <person name="Mortimer J.C."/>
            <person name="Schultink A."/>
            <person name="Reiter W.D."/>
            <person name="Dupree P."/>
            <person name="Pauly M."/>
            <person name="Heazlewood J.L."/>
            <person name="Scheller H.V."/>
            <person name="Orellana A."/>
        </authorList>
    </citation>
    <scope>GENE FAMILY</scope>
    <scope>NOMENCLATURE</scope>
    <scope>SUBCELLULAR LOCATION</scope>
    <scope>FUNCTION</scope>
    <scope>DISRUPTION PHENOTYPE</scope>
    <scope>TISSUE SPECIFICITY</scope>
    <scope>BIOPHYSICOCHEMICAL PROPERTIES</scope>
</reference>
<reference key="7">
    <citation type="journal article" date="2015" name="Plant Cell">
        <title>Identification and characterization of a Golgi-localized UDP-xylose transporter family from Arabidopsis.</title>
        <authorList>
            <person name="Ebert B."/>
            <person name="Rautengarten C."/>
            <person name="Guo X."/>
            <person name="Xiong G."/>
            <person name="Stonebloom S."/>
            <person name="Smith-Moritz A.M."/>
            <person name="Herter T."/>
            <person name="Chan L.J."/>
            <person name="Adams P.D."/>
            <person name="Petzold C.J."/>
            <person name="Pauly M."/>
            <person name="Willats W.G."/>
            <person name="Heazlewood J.L."/>
            <person name="Scheller H.V."/>
        </authorList>
    </citation>
    <scope>GENE FAMILY</scope>
</reference>
<keyword id="KW-0050">Antiport</keyword>
<keyword id="KW-0333">Golgi apparatus</keyword>
<keyword id="KW-0472">Membrane</keyword>
<keyword id="KW-1185">Reference proteome</keyword>
<keyword id="KW-0762">Sugar transport</keyword>
<keyword id="KW-0812">Transmembrane</keyword>
<keyword id="KW-1133">Transmembrane helix</keyword>
<keyword id="KW-0813">Transport</keyword>
<protein>
    <recommendedName>
        <fullName evidence="6">UDP-rhamnose/UDP-galactose transporter 1</fullName>
        <shortName evidence="6">UDP-Rha/UDP-Gal transporter 1</shortName>
    </recommendedName>
    <alternativeName>
        <fullName evidence="5">UDP-galactose transporter 2</fullName>
        <shortName evidence="5">At-UDP-GalT2</shortName>
    </alternativeName>
</protein>
<dbReference type="EMBL" id="AJ633721">
    <property type="protein sequence ID" value="CAG18177.1"/>
    <property type="molecule type" value="mRNA"/>
</dbReference>
<dbReference type="EMBL" id="AC010718">
    <property type="protein sequence ID" value="AAF04433.1"/>
    <property type="molecule type" value="Genomic_DNA"/>
</dbReference>
<dbReference type="EMBL" id="CP002684">
    <property type="protein sequence ID" value="AEE35873.1"/>
    <property type="molecule type" value="Genomic_DNA"/>
</dbReference>
<dbReference type="EMBL" id="CP002684">
    <property type="protein sequence ID" value="ANM58600.1"/>
    <property type="molecule type" value="Genomic_DNA"/>
</dbReference>
<dbReference type="EMBL" id="AY039973">
    <property type="protein sequence ID" value="AAK64150.1"/>
    <property type="molecule type" value="mRNA"/>
</dbReference>
<dbReference type="EMBL" id="AY058088">
    <property type="protein sequence ID" value="AAL24196.1"/>
    <property type="molecule type" value="mRNA"/>
</dbReference>
<dbReference type="EMBL" id="AY074532">
    <property type="protein sequence ID" value="AAL69500.1"/>
    <property type="molecule type" value="mRNA"/>
</dbReference>
<dbReference type="EMBL" id="BT000556">
    <property type="protein sequence ID" value="AAN18125.1"/>
    <property type="molecule type" value="mRNA"/>
</dbReference>
<dbReference type="PIR" id="A96795">
    <property type="entry name" value="A96795"/>
</dbReference>
<dbReference type="RefSeq" id="NP_001319390.1">
    <property type="nucleotide sequence ID" value="NM_001334739.1"/>
</dbReference>
<dbReference type="RefSeq" id="NP_565138.1">
    <property type="nucleotide sequence ID" value="NM_106317.3"/>
</dbReference>
<dbReference type="SMR" id="Q9SRE4"/>
<dbReference type="BioGRID" id="29219">
    <property type="interactions" value="6"/>
</dbReference>
<dbReference type="FunCoup" id="Q9SRE4">
    <property type="interactions" value="2947"/>
</dbReference>
<dbReference type="IntAct" id="Q9SRE4">
    <property type="interactions" value="8"/>
</dbReference>
<dbReference type="STRING" id="3702.Q9SRE4"/>
<dbReference type="TCDB" id="2.A.7.9.12">
    <property type="family name" value="the drug/metabolite transporter (dmt) superfamily"/>
</dbReference>
<dbReference type="PaxDb" id="3702-AT1G76670.1"/>
<dbReference type="ProteomicsDB" id="228695"/>
<dbReference type="EnsemblPlants" id="AT1G76670.1">
    <property type="protein sequence ID" value="AT1G76670.1"/>
    <property type="gene ID" value="AT1G76670"/>
</dbReference>
<dbReference type="EnsemblPlants" id="AT1G76670.2">
    <property type="protein sequence ID" value="AT1G76670.2"/>
    <property type="gene ID" value="AT1G76670"/>
</dbReference>
<dbReference type="GeneID" id="844000"/>
<dbReference type="Gramene" id="AT1G76670.1">
    <property type="protein sequence ID" value="AT1G76670.1"/>
    <property type="gene ID" value="AT1G76670"/>
</dbReference>
<dbReference type="Gramene" id="AT1G76670.2">
    <property type="protein sequence ID" value="AT1G76670.2"/>
    <property type="gene ID" value="AT1G76670"/>
</dbReference>
<dbReference type="KEGG" id="ath:AT1G76670"/>
<dbReference type="Araport" id="AT1G76670"/>
<dbReference type="TAIR" id="AT1G76670">
    <property type="gene designation" value="URGT1"/>
</dbReference>
<dbReference type="eggNOG" id="KOG1441">
    <property type="taxonomic scope" value="Eukaryota"/>
</dbReference>
<dbReference type="HOGENOM" id="CLU_048347_0_1_1"/>
<dbReference type="InParanoid" id="Q9SRE4"/>
<dbReference type="OMA" id="LCITTNI"/>
<dbReference type="OrthoDB" id="5547497at2759"/>
<dbReference type="PhylomeDB" id="Q9SRE4"/>
<dbReference type="PRO" id="PR:Q9SRE4"/>
<dbReference type="Proteomes" id="UP000006548">
    <property type="component" value="Chromosome 1"/>
</dbReference>
<dbReference type="ExpressionAtlas" id="Q9SRE4">
    <property type="expression patterns" value="baseline and differential"/>
</dbReference>
<dbReference type="GO" id="GO:0005794">
    <property type="term" value="C:Golgi apparatus"/>
    <property type="evidence" value="ECO:0000314"/>
    <property type="project" value="TAIR"/>
</dbReference>
<dbReference type="GO" id="GO:0000139">
    <property type="term" value="C:Golgi membrane"/>
    <property type="evidence" value="ECO:0000314"/>
    <property type="project" value="UniProtKB"/>
</dbReference>
<dbReference type="GO" id="GO:0015297">
    <property type="term" value="F:antiporter activity"/>
    <property type="evidence" value="ECO:0000314"/>
    <property type="project" value="UniProtKB"/>
</dbReference>
<dbReference type="GO" id="GO:0005457">
    <property type="term" value="F:GDP-fucose transmembrane transporter activity"/>
    <property type="evidence" value="ECO:0000314"/>
    <property type="project" value="UniProtKB"/>
</dbReference>
<dbReference type="GO" id="GO:0022857">
    <property type="term" value="F:transmembrane transporter activity"/>
    <property type="evidence" value="ECO:0000314"/>
    <property type="project" value="TAIR"/>
</dbReference>
<dbReference type="GO" id="GO:0005459">
    <property type="term" value="F:UDP-galactose transmembrane transporter activity"/>
    <property type="evidence" value="ECO:0000314"/>
    <property type="project" value="UniProtKB"/>
</dbReference>
<dbReference type="GO" id="GO:0005460">
    <property type="term" value="F:UDP-glucose transmembrane transporter activity"/>
    <property type="evidence" value="ECO:0000314"/>
    <property type="project" value="UniProtKB"/>
</dbReference>
<dbReference type="GO" id="GO:0015783">
    <property type="term" value="P:GDP-fucose transmembrane transport"/>
    <property type="evidence" value="ECO:0000314"/>
    <property type="project" value="UniProtKB"/>
</dbReference>
<dbReference type="GO" id="GO:0009833">
    <property type="term" value="P:plant-type primary cell wall biogenesis"/>
    <property type="evidence" value="ECO:0000315"/>
    <property type="project" value="TAIR"/>
</dbReference>
<dbReference type="GO" id="GO:0009624">
    <property type="term" value="P:response to nematode"/>
    <property type="evidence" value="ECO:0007007"/>
    <property type="project" value="TAIR"/>
</dbReference>
<dbReference type="GO" id="GO:0072334">
    <property type="term" value="P:UDP-galactose transmembrane transport"/>
    <property type="evidence" value="ECO:0000314"/>
    <property type="project" value="UniProtKB"/>
</dbReference>
<dbReference type="GO" id="GO:0015786">
    <property type="term" value="P:UDP-glucose transmembrane transport"/>
    <property type="evidence" value="ECO:0000314"/>
    <property type="project" value="UniProtKB"/>
</dbReference>
<dbReference type="InterPro" id="IPR004853">
    <property type="entry name" value="Sugar_P_trans_dom"/>
</dbReference>
<dbReference type="InterPro" id="IPR050186">
    <property type="entry name" value="TPT_transporter"/>
</dbReference>
<dbReference type="PANTHER" id="PTHR11132">
    <property type="entry name" value="SOLUTE CARRIER FAMILY 35"/>
    <property type="match status" value="1"/>
</dbReference>
<dbReference type="Pfam" id="PF03151">
    <property type="entry name" value="TPT"/>
    <property type="match status" value="1"/>
</dbReference>
<dbReference type="SUPFAM" id="SSF103481">
    <property type="entry name" value="Multidrug resistance efflux transporter EmrE"/>
    <property type="match status" value="1"/>
</dbReference>
<accession>Q9SRE4</accession>
<sequence length="347" mass="37693">MEKPESEKKSAVSDVGAWAMNVISSVGIIMANKQLMSSSGFGFGFATTLTGFHFAFTALVGMVSNATGLSASKHVPLWELLWFSIVANISIAAMNFSLMLNSVGFYQISKLSMIPVVCVLEWILHSKHYCKEVKASVMVVVIGVGICTVTDVKVNAKGFICACTAVFSTSLQQISIGSLQKKYSVGSFELLSKTAPIQAISLLICGPFVDYLLSGKFISTYQMTYGAIFCILLSCALAVFCNISQYLCIGRFSATSFQVLGHMKTVCVLTLGWLLFDSEMTFKNIAGMAIAIVGMVIYSWAVDIEKQRNAKSTPHGKHSMTEDEIKLLKEGVEHIDLKDVELGDTKP</sequence>
<organism>
    <name type="scientific">Arabidopsis thaliana</name>
    <name type="common">Mouse-ear cress</name>
    <dbReference type="NCBI Taxonomy" id="3702"/>
    <lineage>
        <taxon>Eukaryota</taxon>
        <taxon>Viridiplantae</taxon>
        <taxon>Streptophyta</taxon>
        <taxon>Embryophyta</taxon>
        <taxon>Tracheophyta</taxon>
        <taxon>Spermatophyta</taxon>
        <taxon>Magnoliopsida</taxon>
        <taxon>eudicotyledons</taxon>
        <taxon>Gunneridae</taxon>
        <taxon>Pentapetalae</taxon>
        <taxon>rosids</taxon>
        <taxon>malvids</taxon>
        <taxon>Brassicales</taxon>
        <taxon>Brassicaceae</taxon>
        <taxon>Camelineae</taxon>
        <taxon>Arabidopsis</taxon>
    </lineage>
</organism>
<name>URGT1_ARATH</name>
<evidence type="ECO:0000255" key="1"/>
<evidence type="ECO:0000269" key="2">
    <source>
    </source>
</evidence>
<evidence type="ECO:0000269" key="3">
    <source>
    </source>
</evidence>
<evidence type="ECO:0000269" key="4">
    <source>
    </source>
</evidence>
<evidence type="ECO:0000303" key="5">
    <source>
    </source>
</evidence>
<evidence type="ECO:0000303" key="6">
    <source>
    </source>
</evidence>
<evidence type="ECO:0000305" key="7"/>
<evidence type="ECO:0000312" key="8">
    <source>
        <dbReference type="Araport" id="AT1G76670"/>
    </source>
</evidence>
<evidence type="ECO:0000312" key="9">
    <source>
        <dbReference type="EMBL" id="AAF04433.1"/>
    </source>
</evidence>
<evidence type="ECO:0000312" key="10">
    <source>
        <dbReference type="EMBL" id="CAG18177.1"/>
    </source>
</evidence>
<feature type="chain" id="PRO_0000406120" description="UDP-rhamnose/UDP-galactose transporter 1">
    <location>
        <begin position="1"/>
        <end position="347"/>
    </location>
</feature>
<feature type="transmembrane region" description="Helical" evidence="1">
    <location>
        <begin position="11"/>
        <end position="31"/>
    </location>
</feature>
<feature type="transmembrane region" description="Helical" evidence="1">
    <location>
        <begin position="43"/>
        <end position="63"/>
    </location>
</feature>
<feature type="transmembrane region" description="Helical" evidence="1">
    <location>
        <begin position="80"/>
        <end position="100"/>
    </location>
</feature>
<feature type="transmembrane region" description="Helical" evidence="1">
    <location>
        <begin position="103"/>
        <end position="123"/>
    </location>
</feature>
<feature type="transmembrane region" description="Helical" evidence="1">
    <location>
        <begin position="132"/>
        <end position="152"/>
    </location>
</feature>
<feature type="transmembrane region" description="Helical" evidence="1">
    <location>
        <begin position="159"/>
        <end position="179"/>
    </location>
</feature>
<feature type="transmembrane region" description="Helical" evidence="1">
    <location>
        <begin position="195"/>
        <end position="215"/>
    </location>
</feature>
<feature type="transmembrane region" description="Helical" evidence="1">
    <location>
        <begin position="223"/>
        <end position="243"/>
    </location>
</feature>
<feature type="transmembrane region" description="Helical" evidence="1">
    <location>
        <begin position="256"/>
        <end position="276"/>
    </location>
</feature>
<feature type="transmembrane region" description="Helical" evidence="1">
    <location>
        <begin position="285"/>
        <end position="305"/>
    </location>
</feature>
<gene>
    <name evidence="6" type="primary">URGT1</name>
    <name evidence="10" type="synonym">UDP-GALT2</name>
    <name evidence="8" type="ordered locus">At1g76670</name>
    <name evidence="9" type="ORF">F28O16.4</name>
</gene>
<proteinExistence type="evidence at protein level"/>
<comment type="function">
    <text evidence="2 4">Nucleotide-sugar transporter that transports UDP-rhamnose or UDP-galactose and UMP in a strict counter-exchange mode.</text>
</comment>
<comment type="biophysicochemical properties">
    <kinetics>
        <KM evidence="4">87 uM for UDP-Rhamnose</KM>
        <KM evidence="4">90 uM for UDP-Galactose</KM>
        <Vmax evidence="4">56.0 nmol/sec/mg enzyme toward UDP-Rhamnose</Vmax>
        <Vmax evidence="4">28.0 nmol/sec/mg enzyme toward UDP-Galactose</Vmax>
    </kinetics>
</comment>
<comment type="subcellular location">
    <subcellularLocation>
        <location evidence="3 4">Golgi apparatus membrane</location>
        <topology evidence="1">Multi-pass membrane protein</topology>
    </subcellularLocation>
</comment>
<comment type="tissue specificity">
    <text evidence="4">Widely expressed in the whole plant.</text>
</comment>
<comment type="disruption phenotype">
    <text evidence="4">No visible phenotype. Slight reduction of galactose content in the cell wall composition.</text>
</comment>
<comment type="similarity">
    <text evidence="7">Belongs to the TPT transporter family. TPT (TC 2.A.7.9) subfamily.</text>
</comment>